<organism>
    <name type="scientific">Escherichia coli O17:K52:H18 (strain UMN026 / ExPEC)</name>
    <dbReference type="NCBI Taxonomy" id="585056"/>
    <lineage>
        <taxon>Bacteria</taxon>
        <taxon>Pseudomonadati</taxon>
        <taxon>Pseudomonadota</taxon>
        <taxon>Gammaproteobacteria</taxon>
        <taxon>Enterobacterales</taxon>
        <taxon>Enterobacteriaceae</taxon>
        <taxon>Escherichia</taxon>
    </lineage>
</organism>
<gene>
    <name evidence="1" type="primary">rplI</name>
    <name type="ordered locus">ECUMN_4736</name>
</gene>
<accession>B7NGD7</accession>
<sequence length="149" mass="15769">MQVILLDKVANLGSLGDQVNVKAGYARNFLVPQGKAVPATKKNIEFFEARRAELEAKLAEVLAAANARAEKINALETVTIASKAGDEGKLFGSIGTRDIADAVTAAGVEVAKSEVRLPNGVLRTTGEHEVSFQVHSEVFAKVIVNVVAE</sequence>
<keyword id="KW-0007">Acetylation</keyword>
<keyword id="KW-0687">Ribonucleoprotein</keyword>
<keyword id="KW-0689">Ribosomal protein</keyword>
<keyword id="KW-0694">RNA-binding</keyword>
<keyword id="KW-0699">rRNA-binding</keyword>
<comment type="function">
    <text evidence="1">Binds to the 23S rRNA.</text>
</comment>
<comment type="similarity">
    <text evidence="1">Belongs to the bacterial ribosomal protein bL9 family.</text>
</comment>
<reference key="1">
    <citation type="journal article" date="2009" name="PLoS Genet.">
        <title>Organised genome dynamics in the Escherichia coli species results in highly diverse adaptive paths.</title>
        <authorList>
            <person name="Touchon M."/>
            <person name="Hoede C."/>
            <person name="Tenaillon O."/>
            <person name="Barbe V."/>
            <person name="Baeriswyl S."/>
            <person name="Bidet P."/>
            <person name="Bingen E."/>
            <person name="Bonacorsi S."/>
            <person name="Bouchier C."/>
            <person name="Bouvet O."/>
            <person name="Calteau A."/>
            <person name="Chiapello H."/>
            <person name="Clermont O."/>
            <person name="Cruveiller S."/>
            <person name="Danchin A."/>
            <person name="Diard M."/>
            <person name="Dossat C."/>
            <person name="Karoui M.E."/>
            <person name="Frapy E."/>
            <person name="Garry L."/>
            <person name="Ghigo J.M."/>
            <person name="Gilles A.M."/>
            <person name="Johnson J."/>
            <person name="Le Bouguenec C."/>
            <person name="Lescat M."/>
            <person name="Mangenot S."/>
            <person name="Martinez-Jehanne V."/>
            <person name="Matic I."/>
            <person name="Nassif X."/>
            <person name="Oztas S."/>
            <person name="Petit M.A."/>
            <person name="Pichon C."/>
            <person name="Rouy Z."/>
            <person name="Ruf C.S."/>
            <person name="Schneider D."/>
            <person name="Tourret J."/>
            <person name="Vacherie B."/>
            <person name="Vallenet D."/>
            <person name="Medigue C."/>
            <person name="Rocha E.P.C."/>
            <person name="Denamur E."/>
        </authorList>
    </citation>
    <scope>NUCLEOTIDE SEQUENCE [LARGE SCALE GENOMIC DNA]</scope>
    <source>
        <strain>UMN026 / ExPEC</strain>
    </source>
</reference>
<evidence type="ECO:0000255" key="1">
    <source>
        <dbReference type="HAMAP-Rule" id="MF_00503"/>
    </source>
</evidence>
<evidence type="ECO:0000305" key="2"/>
<dbReference type="EMBL" id="CU928163">
    <property type="protein sequence ID" value="CAR15849.1"/>
    <property type="molecule type" value="Genomic_DNA"/>
</dbReference>
<dbReference type="RefSeq" id="WP_001196062.1">
    <property type="nucleotide sequence ID" value="NC_011751.1"/>
</dbReference>
<dbReference type="RefSeq" id="YP_002415333.1">
    <property type="nucleotide sequence ID" value="NC_011751.1"/>
</dbReference>
<dbReference type="SMR" id="B7NGD7"/>
<dbReference type="STRING" id="585056.ECUMN_4736"/>
<dbReference type="GeneID" id="93777620"/>
<dbReference type="KEGG" id="eum:ECUMN_4736"/>
<dbReference type="PATRIC" id="fig|585056.7.peg.4899"/>
<dbReference type="HOGENOM" id="CLU_078938_4_1_6"/>
<dbReference type="Proteomes" id="UP000007097">
    <property type="component" value="Chromosome"/>
</dbReference>
<dbReference type="GO" id="GO:1990904">
    <property type="term" value="C:ribonucleoprotein complex"/>
    <property type="evidence" value="ECO:0007669"/>
    <property type="project" value="UniProtKB-KW"/>
</dbReference>
<dbReference type="GO" id="GO:0005840">
    <property type="term" value="C:ribosome"/>
    <property type="evidence" value="ECO:0007669"/>
    <property type="project" value="UniProtKB-KW"/>
</dbReference>
<dbReference type="GO" id="GO:0019843">
    <property type="term" value="F:rRNA binding"/>
    <property type="evidence" value="ECO:0007669"/>
    <property type="project" value="UniProtKB-UniRule"/>
</dbReference>
<dbReference type="GO" id="GO:0003735">
    <property type="term" value="F:structural constituent of ribosome"/>
    <property type="evidence" value="ECO:0007669"/>
    <property type="project" value="InterPro"/>
</dbReference>
<dbReference type="GO" id="GO:0006412">
    <property type="term" value="P:translation"/>
    <property type="evidence" value="ECO:0007669"/>
    <property type="project" value="UniProtKB-UniRule"/>
</dbReference>
<dbReference type="FunFam" id="3.10.430.100:FF:000001">
    <property type="entry name" value="50S ribosomal protein L9"/>
    <property type="match status" value="1"/>
</dbReference>
<dbReference type="FunFam" id="3.40.5.10:FF:000001">
    <property type="entry name" value="50S ribosomal protein L9"/>
    <property type="match status" value="1"/>
</dbReference>
<dbReference type="Gene3D" id="3.10.430.100">
    <property type="entry name" value="Ribosomal protein L9, C-terminal domain"/>
    <property type="match status" value="1"/>
</dbReference>
<dbReference type="Gene3D" id="3.40.5.10">
    <property type="entry name" value="Ribosomal protein L9, N-terminal domain"/>
    <property type="match status" value="1"/>
</dbReference>
<dbReference type="HAMAP" id="MF_00503">
    <property type="entry name" value="Ribosomal_bL9"/>
    <property type="match status" value="1"/>
</dbReference>
<dbReference type="InterPro" id="IPR000244">
    <property type="entry name" value="Ribosomal_bL9"/>
</dbReference>
<dbReference type="InterPro" id="IPR009027">
    <property type="entry name" value="Ribosomal_bL9/RNase_H1_N"/>
</dbReference>
<dbReference type="InterPro" id="IPR020594">
    <property type="entry name" value="Ribosomal_bL9_bac/chp"/>
</dbReference>
<dbReference type="InterPro" id="IPR020069">
    <property type="entry name" value="Ribosomal_bL9_C"/>
</dbReference>
<dbReference type="InterPro" id="IPR036791">
    <property type="entry name" value="Ribosomal_bL9_C_sf"/>
</dbReference>
<dbReference type="InterPro" id="IPR020070">
    <property type="entry name" value="Ribosomal_bL9_N"/>
</dbReference>
<dbReference type="InterPro" id="IPR036935">
    <property type="entry name" value="Ribosomal_bL9_N_sf"/>
</dbReference>
<dbReference type="NCBIfam" id="TIGR00158">
    <property type="entry name" value="L9"/>
    <property type="match status" value="1"/>
</dbReference>
<dbReference type="PANTHER" id="PTHR21368">
    <property type="entry name" value="50S RIBOSOMAL PROTEIN L9"/>
    <property type="match status" value="1"/>
</dbReference>
<dbReference type="Pfam" id="PF03948">
    <property type="entry name" value="Ribosomal_L9_C"/>
    <property type="match status" value="1"/>
</dbReference>
<dbReference type="Pfam" id="PF01281">
    <property type="entry name" value="Ribosomal_L9_N"/>
    <property type="match status" value="1"/>
</dbReference>
<dbReference type="SUPFAM" id="SSF55658">
    <property type="entry name" value="L9 N-domain-like"/>
    <property type="match status" value="1"/>
</dbReference>
<dbReference type="SUPFAM" id="SSF55653">
    <property type="entry name" value="Ribosomal protein L9 C-domain"/>
    <property type="match status" value="1"/>
</dbReference>
<dbReference type="PROSITE" id="PS00651">
    <property type="entry name" value="RIBOSOMAL_L9"/>
    <property type="match status" value="1"/>
</dbReference>
<feature type="chain" id="PRO_1000126909" description="Large ribosomal subunit protein bL9">
    <location>
        <begin position="1"/>
        <end position="149"/>
    </location>
</feature>
<feature type="modified residue" description="N6-acetyllysine" evidence="1">
    <location>
        <position position="89"/>
    </location>
</feature>
<proteinExistence type="inferred from homology"/>
<name>RL9_ECOLU</name>
<protein>
    <recommendedName>
        <fullName evidence="1">Large ribosomal subunit protein bL9</fullName>
    </recommendedName>
    <alternativeName>
        <fullName evidence="2">50S ribosomal protein L9</fullName>
    </alternativeName>
</protein>